<evidence type="ECO:0000255" key="1">
    <source>
        <dbReference type="HAMAP-Rule" id="MF_00805"/>
    </source>
</evidence>
<comment type="function">
    <text evidence="1">Covalent carrier of the coenzyme of citrate lyase.</text>
</comment>
<comment type="subunit">
    <text evidence="1">Oligomer with a subunit composition of (alpha,beta,gamma)6.</text>
</comment>
<comment type="subcellular location">
    <subcellularLocation>
        <location evidence="1">Cytoplasm</location>
    </subcellularLocation>
</comment>
<comment type="similarity">
    <text evidence="1">Belongs to the CitD family.</text>
</comment>
<feature type="chain" id="PRO_0000214698" description="Citrate lyase acyl carrier protein">
    <location>
        <begin position="1"/>
        <end position="94"/>
    </location>
</feature>
<feature type="modified residue" description="O-(phosphoribosyl dephospho-coenzyme A)serine" evidence="1">
    <location>
        <position position="14"/>
    </location>
</feature>
<name>CITD_FUSNN</name>
<keyword id="KW-0963">Cytoplasm</keyword>
<keyword id="KW-0597">Phosphoprotein</keyword>
<keyword id="KW-1185">Reference proteome</keyword>
<sequence>MVLKTVGVAGTLESSDAMITVEPANQGGIVIDISSSVKRQFGRQIEETVLNTIKELGVENANVKVVDKGALNYALIARTKAAVYRAAESNDYKF</sequence>
<proteinExistence type="inferred from homology"/>
<organism>
    <name type="scientific">Fusobacterium nucleatum subsp. nucleatum (strain ATCC 25586 / DSM 15643 / BCRC 10681 / CIP 101130 / JCM 8532 / KCTC 2640 / LMG 13131 / VPI 4355)</name>
    <dbReference type="NCBI Taxonomy" id="190304"/>
    <lineage>
        <taxon>Bacteria</taxon>
        <taxon>Fusobacteriati</taxon>
        <taxon>Fusobacteriota</taxon>
        <taxon>Fusobacteriia</taxon>
        <taxon>Fusobacteriales</taxon>
        <taxon>Fusobacteriaceae</taxon>
        <taxon>Fusobacterium</taxon>
    </lineage>
</organism>
<protein>
    <recommendedName>
        <fullName evidence="1">Citrate lyase acyl carrier protein</fullName>
    </recommendedName>
    <alternativeName>
        <fullName evidence="1">Citrate lyase gamma chain</fullName>
    </alternativeName>
</protein>
<dbReference type="EMBL" id="AE009951">
    <property type="protein sequence ID" value="AAL95574.1"/>
    <property type="molecule type" value="Genomic_DNA"/>
</dbReference>
<dbReference type="RefSeq" id="NP_604275.1">
    <property type="nucleotide sequence ID" value="NC_003454.1"/>
</dbReference>
<dbReference type="RefSeq" id="WP_011017111.1">
    <property type="nucleotide sequence ID" value="NZ_OZ209243.1"/>
</dbReference>
<dbReference type="SMR" id="Q8RDW6"/>
<dbReference type="STRING" id="190304.FN1378"/>
<dbReference type="PaxDb" id="190304-FN1378"/>
<dbReference type="EnsemblBacteria" id="AAL95574">
    <property type="protein sequence ID" value="AAL95574"/>
    <property type="gene ID" value="FN1378"/>
</dbReference>
<dbReference type="GeneID" id="79784350"/>
<dbReference type="KEGG" id="fnu:FN1378"/>
<dbReference type="PATRIC" id="fig|190304.8.peg.1943"/>
<dbReference type="eggNOG" id="COG3052">
    <property type="taxonomic scope" value="Bacteria"/>
</dbReference>
<dbReference type="HOGENOM" id="CLU_158489_0_0_0"/>
<dbReference type="InParanoid" id="Q8RDW6"/>
<dbReference type="BioCyc" id="FNUC190304:G1FZS-1950-MONOMER"/>
<dbReference type="Proteomes" id="UP000002521">
    <property type="component" value="Chromosome"/>
</dbReference>
<dbReference type="GO" id="GO:0005737">
    <property type="term" value="C:cytoplasm"/>
    <property type="evidence" value="ECO:0007669"/>
    <property type="project" value="UniProtKB-SubCell"/>
</dbReference>
<dbReference type="HAMAP" id="MF_00805">
    <property type="entry name" value="CitD"/>
    <property type="match status" value="1"/>
</dbReference>
<dbReference type="InterPro" id="IPR006495">
    <property type="entry name" value="CitD"/>
</dbReference>
<dbReference type="InterPro" id="IPR023439">
    <property type="entry name" value="Mal_deCO2ase/Cit_lyase_ACP"/>
</dbReference>
<dbReference type="NCBIfam" id="TIGR01608">
    <property type="entry name" value="citD"/>
    <property type="match status" value="1"/>
</dbReference>
<dbReference type="NCBIfam" id="NF009726">
    <property type="entry name" value="PRK13253.1"/>
    <property type="match status" value="1"/>
</dbReference>
<dbReference type="Pfam" id="PF06857">
    <property type="entry name" value="ACP"/>
    <property type="match status" value="1"/>
</dbReference>
<dbReference type="PIRSF" id="PIRSF002736">
    <property type="entry name" value="Citrt_lyas_gamma"/>
    <property type="match status" value="1"/>
</dbReference>
<accession>Q8RDW6</accession>
<reference key="1">
    <citation type="journal article" date="2002" name="J. Bacteriol.">
        <title>Genome sequence and analysis of the oral bacterium Fusobacterium nucleatum strain ATCC 25586.</title>
        <authorList>
            <person name="Kapatral V."/>
            <person name="Anderson I."/>
            <person name="Ivanova N."/>
            <person name="Reznik G."/>
            <person name="Los T."/>
            <person name="Lykidis A."/>
            <person name="Bhattacharyya A."/>
            <person name="Bartman A."/>
            <person name="Gardner W."/>
            <person name="Grechkin G."/>
            <person name="Zhu L."/>
            <person name="Vasieva O."/>
            <person name="Chu L."/>
            <person name="Kogan Y."/>
            <person name="Chaga O."/>
            <person name="Goltsman E."/>
            <person name="Bernal A."/>
            <person name="Larsen N."/>
            <person name="D'Souza M."/>
            <person name="Walunas T."/>
            <person name="Pusch G."/>
            <person name="Haselkorn R."/>
            <person name="Fonstein M."/>
            <person name="Kyrpides N.C."/>
            <person name="Overbeek R."/>
        </authorList>
    </citation>
    <scope>NUCLEOTIDE SEQUENCE [LARGE SCALE GENOMIC DNA]</scope>
    <source>
        <strain>ATCC 25586 / DSM 15643 / BCRC 10681 / CIP 101130 / JCM 8532 / KCTC 2640 / LMG 13131 / VPI 4355</strain>
    </source>
</reference>
<gene>
    <name evidence="1" type="primary">citD</name>
    <name type="ordered locus">FN1378</name>
</gene>